<sequence length="113" mass="12866">MRIFVYGSLRHKQGNSHWMTNAQLLGDFSIDNYQLYSLGHYPGAVPGNGTVHGEVYRIDNATLAELDALRTRGGEYARQLIQTPYGSAWMYVYQRPVDGLKLIESGDWLDRDK</sequence>
<organism>
    <name type="scientific">Shigella flexneri</name>
    <dbReference type="NCBI Taxonomy" id="623"/>
    <lineage>
        <taxon>Bacteria</taxon>
        <taxon>Pseudomonadati</taxon>
        <taxon>Pseudomonadota</taxon>
        <taxon>Gammaproteobacteria</taxon>
        <taxon>Enterobacterales</taxon>
        <taxon>Enterobacteriaceae</taxon>
        <taxon>Shigella</taxon>
    </lineage>
</organism>
<protein>
    <recommendedName>
        <fullName>Gamma-glutamylcyclotransferase family protein YtfP</fullName>
    </recommendedName>
</protein>
<proteinExistence type="inferred from homology"/>
<accession>P0AE51</accession>
<accession>P39323</accession>
<dbReference type="EMBL" id="AE005674">
    <property type="protein sequence ID" value="AAN45683.1"/>
    <property type="molecule type" value="Genomic_DNA"/>
</dbReference>
<dbReference type="EMBL" id="AE014073">
    <property type="protein sequence ID" value="AAP19469.1"/>
    <property type="molecule type" value="Genomic_DNA"/>
</dbReference>
<dbReference type="RefSeq" id="NP_709976.1">
    <property type="nucleotide sequence ID" value="NC_004337.2"/>
</dbReference>
<dbReference type="RefSeq" id="WP_001219160.1">
    <property type="nucleotide sequence ID" value="NZ_WPGW01000086.1"/>
</dbReference>
<dbReference type="BMRB" id="P0AE51"/>
<dbReference type="SMR" id="P0AE51"/>
<dbReference type="STRING" id="198214.SF4265"/>
<dbReference type="PaxDb" id="198214-SF4265"/>
<dbReference type="GeneID" id="1024300"/>
<dbReference type="KEGG" id="sfl:SF4265"/>
<dbReference type="KEGG" id="sfx:S4529"/>
<dbReference type="PATRIC" id="fig|198214.7.peg.5032"/>
<dbReference type="HOGENOM" id="CLU_083466_5_2_6"/>
<dbReference type="Proteomes" id="UP000001006">
    <property type="component" value="Chromosome"/>
</dbReference>
<dbReference type="Proteomes" id="UP000002673">
    <property type="component" value="Chromosome"/>
</dbReference>
<dbReference type="GO" id="GO:0005829">
    <property type="term" value="C:cytosol"/>
    <property type="evidence" value="ECO:0007669"/>
    <property type="project" value="TreeGrafter"/>
</dbReference>
<dbReference type="GO" id="GO:0061929">
    <property type="term" value="F:gamma-glutamylaminecyclotransferase activity"/>
    <property type="evidence" value="ECO:0007669"/>
    <property type="project" value="InterPro"/>
</dbReference>
<dbReference type="CDD" id="cd06661">
    <property type="entry name" value="GGCT_like"/>
    <property type="match status" value="1"/>
</dbReference>
<dbReference type="FunFam" id="3.10.490.10:FF:000001">
    <property type="entry name" value="Gamma-glutamylcyclotransferase ytfP"/>
    <property type="match status" value="1"/>
</dbReference>
<dbReference type="Gene3D" id="3.10.490.10">
    <property type="entry name" value="Gamma-glutamyl cyclotransferase-like"/>
    <property type="match status" value="1"/>
</dbReference>
<dbReference type="InterPro" id="IPR009288">
    <property type="entry name" value="AIG2-like_dom"/>
</dbReference>
<dbReference type="InterPro" id="IPR039126">
    <property type="entry name" value="GGACT"/>
</dbReference>
<dbReference type="InterPro" id="IPR013024">
    <property type="entry name" value="GGCT-like"/>
</dbReference>
<dbReference type="InterPro" id="IPR036568">
    <property type="entry name" value="GGCT-like_sf"/>
</dbReference>
<dbReference type="PANTHER" id="PTHR12510:SF4">
    <property type="entry name" value="GAMMA-GLUTAMYLAMINECYCLOTRANSFERASE"/>
    <property type="match status" value="1"/>
</dbReference>
<dbReference type="PANTHER" id="PTHR12510">
    <property type="entry name" value="TROPONIN C-AKIN-1 PROTEIN"/>
    <property type="match status" value="1"/>
</dbReference>
<dbReference type="Pfam" id="PF06094">
    <property type="entry name" value="GGACT"/>
    <property type="match status" value="1"/>
</dbReference>
<dbReference type="SUPFAM" id="SSF110857">
    <property type="entry name" value="Gamma-glutamyl cyclotransferase-like"/>
    <property type="match status" value="1"/>
</dbReference>
<gene>
    <name type="primary">ytfP</name>
    <name type="ordered locus">SF4265</name>
    <name type="ordered locus">S4529</name>
</gene>
<name>YTFP_SHIFL</name>
<feature type="chain" id="PRO_0000184792" description="Gamma-glutamylcyclotransferase family protein YtfP">
    <location>
        <begin position="1"/>
        <end position="113"/>
    </location>
</feature>
<reference key="1">
    <citation type="journal article" date="2002" name="Nucleic Acids Res.">
        <title>Genome sequence of Shigella flexneri 2a: insights into pathogenicity through comparison with genomes of Escherichia coli K12 and O157.</title>
        <authorList>
            <person name="Jin Q."/>
            <person name="Yuan Z."/>
            <person name="Xu J."/>
            <person name="Wang Y."/>
            <person name="Shen Y."/>
            <person name="Lu W."/>
            <person name="Wang J."/>
            <person name="Liu H."/>
            <person name="Yang J."/>
            <person name="Yang F."/>
            <person name="Zhang X."/>
            <person name="Zhang J."/>
            <person name="Yang G."/>
            <person name="Wu H."/>
            <person name="Qu D."/>
            <person name="Dong J."/>
            <person name="Sun L."/>
            <person name="Xue Y."/>
            <person name="Zhao A."/>
            <person name="Gao Y."/>
            <person name="Zhu J."/>
            <person name="Kan B."/>
            <person name="Ding K."/>
            <person name="Chen S."/>
            <person name="Cheng H."/>
            <person name="Yao Z."/>
            <person name="He B."/>
            <person name="Chen R."/>
            <person name="Ma D."/>
            <person name="Qiang B."/>
            <person name="Wen Y."/>
            <person name="Hou Y."/>
            <person name="Yu J."/>
        </authorList>
    </citation>
    <scope>NUCLEOTIDE SEQUENCE [LARGE SCALE GENOMIC DNA]</scope>
    <source>
        <strain>301 / Serotype 2a</strain>
    </source>
</reference>
<reference key="2">
    <citation type="journal article" date="2003" name="Infect. Immun.">
        <title>Complete genome sequence and comparative genomics of Shigella flexneri serotype 2a strain 2457T.</title>
        <authorList>
            <person name="Wei J."/>
            <person name="Goldberg M.B."/>
            <person name="Burland V."/>
            <person name="Venkatesan M.M."/>
            <person name="Deng W."/>
            <person name="Fournier G."/>
            <person name="Mayhew G.F."/>
            <person name="Plunkett G. III"/>
            <person name="Rose D.J."/>
            <person name="Darling A."/>
            <person name="Mau B."/>
            <person name="Perna N.T."/>
            <person name="Payne S.M."/>
            <person name="Runyen-Janecky L.J."/>
            <person name="Zhou S."/>
            <person name="Schwartz D.C."/>
            <person name="Blattner F.R."/>
        </authorList>
    </citation>
    <scope>NUCLEOTIDE SEQUENCE [LARGE SCALE GENOMIC DNA]</scope>
    <source>
        <strain>ATCC 700930 / 2457T / Serotype 2a</strain>
    </source>
</reference>
<evidence type="ECO:0000305" key="1"/>
<comment type="similarity">
    <text evidence="1">Belongs to the gamma-glutamylcyclotransferase family.</text>
</comment>
<comment type="caution">
    <text evidence="1">Lacks the conserved Glu residue at position 70 that serves as proton acceptor in enzymes with gamma-glutamylcyclotransferase activity.</text>
</comment>
<keyword id="KW-1185">Reference proteome</keyword>